<evidence type="ECO:0000255" key="1">
    <source>
        <dbReference type="HAMAP-Rule" id="MF_01418"/>
    </source>
</evidence>
<comment type="function">
    <text evidence="1">Catalyzes the formation of putrescine from agmatine.</text>
</comment>
<comment type="catalytic activity">
    <reaction evidence="1">
        <text>agmatine + H2O = urea + putrescine</text>
        <dbReference type="Rhea" id="RHEA:13929"/>
        <dbReference type="ChEBI" id="CHEBI:15377"/>
        <dbReference type="ChEBI" id="CHEBI:16199"/>
        <dbReference type="ChEBI" id="CHEBI:58145"/>
        <dbReference type="ChEBI" id="CHEBI:326268"/>
        <dbReference type="EC" id="3.5.3.11"/>
    </reaction>
</comment>
<comment type="cofactor">
    <cofactor evidence="1">
        <name>Mn(2+)</name>
        <dbReference type="ChEBI" id="CHEBI:29035"/>
    </cofactor>
</comment>
<comment type="pathway">
    <text evidence="1">Amine and polyamine biosynthesis; putrescine biosynthesis via agmatine pathway; putrescine from agmatine: step 1/1.</text>
</comment>
<comment type="similarity">
    <text evidence="1">Belongs to the arginase family. Agmatinase subfamily.</text>
</comment>
<protein>
    <recommendedName>
        <fullName evidence="1">Agmatinase</fullName>
        <ecNumber evidence="1">3.5.3.11</ecNumber>
    </recommendedName>
    <alternativeName>
        <fullName evidence="1">Agmatine ureohydrolase</fullName>
        <shortName evidence="1">AUH</shortName>
    </alternativeName>
</protein>
<name>SPEB_SALDC</name>
<sequence>MSTLGHQYDNSLVSNAFGFLRLPMNFQPYDSDADWVITGVPFDMATSGRAGGRHGPAAIRQVSTNLAWEHHRFPWSFDMRERLNVVDCGDLVYAFGDAREMSEKLQAHAEKLLSAGKRMLSFGGDHFVTLPLLRAHAKHFGKMALVHFDAHTDTYANGCEFDHGTMFYTAPKEGLIDPHHSVQIGIRTEFDKDNGFTVLDACQVNDRGVDDILAQVKQIVGDMPVYLTFDIDCLDPAFAPGTGTPVIGGLTSDRAIKLVRGLKDLNIVGMDVVEVAPAYDQSEITALAAATLALEMLYIQAAKKGE</sequence>
<organism>
    <name type="scientific">Salmonella dublin (strain CT_02021853)</name>
    <dbReference type="NCBI Taxonomy" id="439851"/>
    <lineage>
        <taxon>Bacteria</taxon>
        <taxon>Pseudomonadati</taxon>
        <taxon>Pseudomonadota</taxon>
        <taxon>Gammaproteobacteria</taxon>
        <taxon>Enterobacterales</taxon>
        <taxon>Enterobacteriaceae</taxon>
        <taxon>Salmonella</taxon>
    </lineage>
</organism>
<accession>B5FUJ0</accession>
<gene>
    <name evidence="1" type="primary">speB</name>
    <name type="ordered locus">SeD_A3420</name>
</gene>
<dbReference type="EC" id="3.5.3.11" evidence="1"/>
<dbReference type="EMBL" id="CP001144">
    <property type="protein sequence ID" value="ACH77920.1"/>
    <property type="molecule type" value="Genomic_DNA"/>
</dbReference>
<dbReference type="RefSeq" id="WP_000105553.1">
    <property type="nucleotide sequence ID" value="NC_011205.1"/>
</dbReference>
<dbReference type="SMR" id="B5FUJ0"/>
<dbReference type="KEGG" id="sed:SeD_A3420"/>
<dbReference type="HOGENOM" id="CLU_039478_0_0_6"/>
<dbReference type="UniPathway" id="UPA00534">
    <property type="reaction ID" value="UER00287"/>
</dbReference>
<dbReference type="Proteomes" id="UP000008322">
    <property type="component" value="Chromosome"/>
</dbReference>
<dbReference type="GO" id="GO:0008783">
    <property type="term" value="F:agmatinase activity"/>
    <property type="evidence" value="ECO:0007669"/>
    <property type="project" value="UniProtKB-UniRule"/>
</dbReference>
<dbReference type="GO" id="GO:0030145">
    <property type="term" value="F:manganese ion binding"/>
    <property type="evidence" value="ECO:0007669"/>
    <property type="project" value="InterPro"/>
</dbReference>
<dbReference type="GO" id="GO:0033389">
    <property type="term" value="P:putrescine biosynthetic process from arginine, via agmatine"/>
    <property type="evidence" value="ECO:0007669"/>
    <property type="project" value="TreeGrafter"/>
</dbReference>
<dbReference type="GO" id="GO:0008295">
    <property type="term" value="P:spermidine biosynthetic process"/>
    <property type="evidence" value="ECO:0007669"/>
    <property type="project" value="UniProtKB-UniRule"/>
</dbReference>
<dbReference type="CDD" id="cd11592">
    <property type="entry name" value="Agmatinase_PAH"/>
    <property type="match status" value="1"/>
</dbReference>
<dbReference type="FunFam" id="3.40.800.10:FF:000001">
    <property type="entry name" value="Agmatinase"/>
    <property type="match status" value="1"/>
</dbReference>
<dbReference type="Gene3D" id="3.40.800.10">
    <property type="entry name" value="Ureohydrolase domain"/>
    <property type="match status" value="1"/>
</dbReference>
<dbReference type="HAMAP" id="MF_01418">
    <property type="entry name" value="SpeB"/>
    <property type="match status" value="1"/>
</dbReference>
<dbReference type="InterPro" id="IPR023694">
    <property type="entry name" value="Agmatinase"/>
</dbReference>
<dbReference type="InterPro" id="IPR005925">
    <property type="entry name" value="Agmatinase-rel"/>
</dbReference>
<dbReference type="InterPro" id="IPR006035">
    <property type="entry name" value="Ureohydrolase"/>
</dbReference>
<dbReference type="InterPro" id="IPR023696">
    <property type="entry name" value="Ureohydrolase_dom_sf"/>
</dbReference>
<dbReference type="InterPro" id="IPR020855">
    <property type="entry name" value="Ureohydrolase_Mn_BS"/>
</dbReference>
<dbReference type="NCBIfam" id="TIGR01230">
    <property type="entry name" value="agmatinase"/>
    <property type="match status" value="1"/>
</dbReference>
<dbReference type="NCBIfam" id="NF002564">
    <property type="entry name" value="PRK02190.1"/>
    <property type="match status" value="1"/>
</dbReference>
<dbReference type="PANTHER" id="PTHR11358">
    <property type="entry name" value="ARGINASE/AGMATINASE"/>
    <property type="match status" value="1"/>
</dbReference>
<dbReference type="PANTHER" id="PTHR11358:SF26">
    <property type="entry name" value="GUANIDINO ACID HYDROLASE, MITOCHONDRIAL"/>
    <property type="match status" value="1"/>
</dbReference>
<dbReference type="Pfam" id="PF00491">
    <property type="entry name" value="Arginase"/>
    <property type="match status" value="1"/>
</dbReference>
<dbReference type="PIRSF" id="PIRSF036979">
    <property type="entry name" value="Arginase"/>
    <property type="match status" value="1"/>
</dbReference>
<dbReference type="SUPFAM" id="SSF52768">
    <property type="entry name" value="Arginase/deacetylase"/>
    <property type="match status" value="1"/>
</dbReference>
<dbReference type="PROSITE" id="PS01053">
    <property type="entry name" value="ARGINASE_1"/>
    <property type="match status" value="1"/>
</dbReference>
<dbReference type="PROSITE" id="PS51409">
    <property type="entry name" value="ARGINASE_2"/>
    <property type="match status" value="1"/>
</dbReference>
<keyword id="KW-0378">Hydrolase</keyword>
<keyword id="KW-0464">Manganese</keyword>
<keyword id="KW-0479">Metal-binding</keyword>
<keyword id="KW-0620">Polyamine biosynthesis</keyword>
<keyword id="KW-0661">Putrescine biosynthesis</keyword>
<keyword id="KW-0745">Spermidine biosynthesis</keyword>
<reference key="1">
    <citation type="journal article" date="2011" name="J. Bacteriol.">
        <title>Comparative genomics of 28 Salmonella enterica isolates: evidence for CRISPR-mediated adaptive sublineage evolution.</title>
        <authorList>
            <person name="Fricke W.F."/>
            <person name="Mammel M.K."/>
            <person name="McDermott P.F."/>
            <person name="Tartera C."/>
            <person name="White D.G."/>
            <person name="Leclerc J.E."/>
            <person name="Ravel J."/>
            <person name="Cebula T.A."/>
        </authorList>
    </citation>
    <scope>NUCLEOTIDE SEQUENCE [LARGE SCALE GENOMIC DNA]</scope>
    <source>
        <strain>CT_02021853</strain>
    </source>
</reference>
<feature type="chain" id="PRO_1000145620" description="Agmatinase">
    <location>
        <begin position="1"/>
        <end position="306"/>
    </location>
</feature>
<feature type="binding site" evidence="1">
    <location>
        <position position="126"/>
    </location>
    <ligand>
        <name>Mn(2+)</name>
        <dbReference type="ChEBI" id="CHEBI:29035"/>
    </ligand>
</feature>
<feature type="binding site" evidence="1">
    <location>
        <position position="149"/>
    </location>
    <ligand>
        <name>Mn(2+)</name>
        <dbReference type="ChEBI" id="CHEBI:29035"/>
    </ligand>
</feature>
<feature type="binding site" evidence="1">
    <location>
        <position position="151"/>
    </location>
    <ligand>
        <name>Mn(2+)</name>
        <dbReference type="ChEBI" id="CHEBI:29035"/>
    </ligand>
</feature>
<feature type="binding site" evidence="1">
    <location>
        <position position="153"/>
    </location>
    <ligand>
        <name>Mn(2+)</name>
        <dbReference type="ChEBI" id="CHEBI:29035"/>
    </ligand>
</feature>
<feature type="binding site" evidence="1">
    <location>
        <position position="230"/>
    </location>
    <ligand>
        <name>Mn(2+)</name>
        <dbReference type="ChEBI" id="CHEBI:29035"/>
    </ligand>
</feature>
<feature type="binding site" evidence="1">
    <location>
        <position position="232"/>
    </location>
    <ligand>
        <name>Mn(2+)</name>
        <dbReference type="ChEBI" id="CHEBI:29035"/>
    </ligand>
</feature>
<proteinExistence type="inferred from homology"/>